<evidence type="ECO:0000255" key="1">
    <source>
        <dbReference type="HAMAP-Rule" id="MF_01551"/>
    </source>
</evidence>
<reference key="1">
    <citation type="submission" date="2008-02" db="EMBL/GenBank/DDBJ databases">
        <title>Complete sequence of Shewanella woodyi ATCC 51908.</title>
        <authorList>
            <consortium name="US DOE Joint Genome Institute"/>
            <person name="Copeland A."/>
            <person name="Lucas S."/>
            <person name="Lapidus A."/>
            <person name="Glavina del Rio T."/>
            <person name="Dalin E."/>
            <person name="Tice H."/>
            <person name="Bruce D."/>
            <person name="Goodwin L."/>
            <person name="Pitluck S."/>
            <person name="Sims D."/>
            <person name="Brettin T."/>
            <person name="Detter J.C."/>
            <person name="Han C."/>
            <person name="Kuske C.R."/>
            <person name="Schmutz J."/>
            <person name="Larimer F."/>
            <person name="Land M."/>
            <person name="Hauser L."/>
            <person name="Kyrpides N."/>
            <person name="Lykidis A."/>
            <person name="Zhao J.-S."/>
            <person name="Richardson P."/>
        </authorList>
    </citation>
    <scope>NUCLEOTIDE SEQUENCE [LARGE SCALE GENOMIC DNA]</scope>
    <source>
        <strain>ATCC 51908 / MS32</strain>
    </source>
</reference>
<name>RLMM_SHEWM</name>
<proteinExistence type="inferred from homology"/>
<gene>
    <name evidence="1" type="primary">rlmM</name>
    <name type="ordered locus">Swoo_3468</name>
</gene>
<protein>
    <recommendedName>
        <fullName evidence="1">Ribosomal RNA large subunit methyltransferase M</fullName>
        <ecNumber evidence="1">2.1.1.186</ecNumber>
    </recommendedName>
    <alternativeName>
        <fullName evidence="1">23S rRNA (cytidine2498-2'-O)-methyltransferase</fullName>
    </alternativeName>
    <alternativeName>
        <fullName evidence="1">23S rRNA 2'-O-ribose methyltransferase RlmM</fullName>
    </alternativeName>
</protein>
<organism>
    <name type="scientific">Shewanella woodyi (strain ATCC 51908 / MS32)</name>
    <dbReference type="NCBI Taxonomy" id="392500"/>
    <lineage>
        <taxon>Bacteria</taxon>
        <taxon>Pseudomonadati</taxon>
        <taxon>Pseudomonadota</taxon>
        <taxon>Gammaproteobacteria</taxon>
        <taxon>Alteromonadales</taxon>
        <taxon>Shewanellaceae</taxon>
        <taxon>Shewanella</taxon>
    </lineage>
</organism>
<feature type="chain" id="PRO_1000201533" description="Ribosomal RNA large subunit methyltransferase M">
    <location>
        <begin position="1"/>
        <end position="358"/>
    </location>
</feature>
<feature type="active site" description="Proton acceptor" evidence="1">
    <location>
        <position position="305"/>
    </location>
</feature>
<feature type="binding site" evidence="1">
    <location>
        <position position="187"/>
    </location>
    <ligand>
        <name>S-adenosyl-L-methionine</name>
        <dbReference type="ChEBI" id="CHEBI:59789"/>
    </ligand>
</feature>
<feature type="binding site" evidence="1">
    <location>
        <begin position="220"/>
        <end position="223"/>
    </location>
    <ligand>
        <name>S-adenosyl-L-methionine</name>
        <dbReference type="ChEBI" id="CHEBI:59789"/>
    </ligand>
</feature>
<feature type="binding site" evidence="1">
    <location>
        <position position="239"/>
    </location>
    <ligand>
        <name>S-adenosyl-L-methionine</name>
        <dbReference type="ChEBI" id="CHEBI:59789"/>
    </ligand>
</feature>
<feature type="binding site" evidence="1">
    <location>
        <position position="259"/>
    </location>
    <ligand>
        <name>S-adenosyl-L-methionine</name>
        <dbReference type="ChEBI" id="CHEBI:59789"/>
    </ligand>
</feature>
<feature type="binding site" evidence="1">
    <location>
        <position position="276"/>
    </location>
    <ligand>
        <name>S-adenosyl-L-methionine</name>
        <dbReference type="ChEBI" id="CHEBI:59789"/>
    </ligand>
</feature>
<accession>B1KQX8</accession>
<comment type="function">
    <text evidence="1">Catalyzes the 2'-O-methylation at nucleotide C2498 in 23S rRNA.</text>
</comment>
<comment type="catalytic activity">
    <reaction evidence="1">
        <text>cytidine(2498) in 23S rRNA + S-adenosyl-L-methionine = 2'-O-methylcytidine(2498) in 23S rRNA + S-adenosyl-L-homocysteine + H(+)</text>
        <dbReference type="Rhea" id="RHEA:42788"/>
        <dbReference type="Rhea" id="RHEA-COMP:10244"/>
        <dbReference type="Rhea" id="RHEA-COMP:10245"/>
        <dbReference type="ChEBI" id="CHEBI:15378"/>
        <dbReference type="ChEBI" id="CHEBI:57856"/>
        <dbReference type="ChEBI" id="CHEBI:59789"/>
        <dbReference type="ChEBI" id="CHEBI:74495"/>
        <dbReference type="ChEBI" id="CHEBI:82748"/>
        <dbReference type="EC" id="2.1.1.186"/>
    </reaction>
</comment>
<comment type="subunit">
    <text evidence="1">Monomer.</text>
</comment>
<comment type="subcellular location">
    <subcellularLocation>
        <location evidence="1">Cytoplasm</location>
    </subcellularLocation>
</comment>
<comment type="similarity">
    <text evidence="1">Belongs to the class I-like SAM-binding methyltransferase superfamily. RNA methyltransferase RlmE family. RlmM subfamily.</text>
</comment>
<sequence>MINLFLYCRSGYEKECAAEIQHRAAELEIGGFVKTNKKDGYVIFQCFQAGDANILAQKIKLDSLIFARQMFAAKELLKNLPEHDRITPIMEALSDVRNAGELRVETPDTNEAKERTAFCRKFTVPLRQKLKNAGNLLKKENSSRPIIHVCFVASGTAYVGFSFSNNSSPYPMGIPRLKMASDAPSRSTLKLDEAFIHFIPEEEQEQRLSSGMNAVDLGACPGGWTYQLVRRGMFVAAVDNGPMDEGLMETGQVKHYQADGFRFEPPRKNIYWLVCDMIEKPSRVAELIEAWAINGWFKEAMFNLKLPMKSRYQDVSTILETMATVLEENEIKNFSIKCKHLYHDRDEVTVYLSLNPTQ</sequence>
<keyword id="KW-0963">Cytoplasm</keyword>
<keyword id="KW-0489">Methyltransferase</keyword>
<keyword id="KW-1185">Reference proteome</keyword>
<keyword id="KW-0698">rRNA processing</keyword>
<keyword id="KW-0949">S-adenosyl-L-methionine</keyword>
<keyword id="KW-0808">Transferase</keyword>
<dbReference type="EC" id="2.1.1.186" evidence="1"/>
<dbReference type="EMBL" id="CP000961">
    <property type="protein sequence ID" value="ACA87734.1"/>
    <property type="molecule type" value="Genomic_DNA"/>
</dbReference>
<dbReference type="RefSeq" id="WP_012326068.1">
    <property type="nucleotide sequence ID" value="NC_010506.1"/>
</dbReference>
<dbReference type="SMR" id="B1KQX8"/>
<dbReference type="STRING" id="392500.Swoo_3468"/>
<dbReference type="KEGG" id="swd:Swoo_3468"/>
<dbReference type="eggNOG" id="COG2933">
    <property type="taxonomic scope" value="Bacteria"/>
</dbReference>
<dbReference type="HOGENOM" id="CLU_043780_0_0_6"/>
<dbReference type="Proteomes" id="UP000002168">
    <property type="component" value="Chromosome"/>
</dbReference>
<dbReference type="GO" id="GO:0005737">
    <property type="term" value="C:cytoplasm"/>
    <property type="evidence" value="ECO:0007669"/>
    <property type="project" value="UniProtKB-SubCell"/>
</dbReference>
<dbReference type="GO" id="GO:0008757">
    <property type="term" value="F:S-adenosylmethionine-dependent methyltransferase activity"/>
    <property type="evidence" value="ECO:0007669"/>
    <property type="project" value="UniProtKB-UniRule"/>
</dbReference>
<dbReference type="GO" id="GO:0032259">
    <property type="term" value="P:methylation"/>
    <property type="evidence" value="ECO:0007669"/>
    <property type="project" value="UniProtKB-KW"/>
</dbReference>
<dbReference type="GO" id="GO:0006364">
    <property type="term" value="P:rRNA processing"/>
    <property type="evidence" value="ECO:0007669"/>
    <property type="project" value="UniProtKB-UniRule"/>
</dbReference>
<dbReference type="Gene3D" id="3.30.2300.20">
    <property type="match status" value="1"/>
</dbReference>
<dbReference type="Gene3D" id="3.30.70.2810">
    <property type="match status" value="1"/>
</dbReference>
<dbReference type="Gene3D" id="3.40.50.150">
    <property type="entry name" value="Vaccinia Virus protein VP39"/>
    <property type="match status" value="1"/>
</dbReference>
<dbReference type="HAMAP" id="MF_01551">
    <property type="entry name" value="23SrRNA_methyltr_M"/>
    <property type="match status" value="1"/>
</dbReference>
<dbReference type="InterPro" id="IPR040739">
    <property type="entry name" value="RlmM_FDX"/>
</dbReference>
<dbReference type="InterPro" id="IPR048646">
    <property type="entry name" value="RlmM_THUMP-like"/>
</dbReference>
<dbReference type="InterPro" id="IPR002877">
    <property type="entry name" value="RNA_MeTrfase_FtsJ_dom"/>
</dbReference>
<dbReference type="InterPro" id="IPR011224">
    <property type="entry name" value="rRNA_MeTrfase_M"/>
</dbReference>
<dbReference type="InterPro" id="IPR029063">
    <property type="entry name" value="SAM-dependent_MTases_sf"/>
</dbReference>
<dbReference type="NCBIfam" id="NF008734">
    <property type="entry name" value="PRK11760.1"/>
    <property type="match status" value="1"/>
</dbReference>
<dbReference type="PANTHER" id="PTHR37524">
    <property type="entry name" value="RIBOSOMAL RNA LARGE SUBUNIT METHYLTRANSFERASE M"/>
    <property type="match status" value="1"/>
</dbReference>
<dbReference type="PANTHER" id="PTHR37524:SF2">
    <property type="entry name" value="RIBOSOMAL RNA METHYLTRANSFERASE FTSJ DOMAIN-CONTAINING PROTEIN"/>
    <property type="match status" value="1"/>
</dbReference>
<dbReference type="Pfam" id="PF01728">
    <property type="entry name" value="FtsJ"/>
    <property type="match status" value="1"/>
</dbReference>
<dbReference type="Pfam" id="PF18125">
    <property type="entry name" value="RlmM_FDX"/>
    <property type="match status" value="1"/>
</dbReference>
<dbReference type="Pfam" id="PF21239">
    <property type="entry name" value="RLMM_N"/>
    <property type="match status" value="1"/>
</dbReference>
<dbReference type="PIRSF" id="PIRSF028774">
    <property type="entry name" value="UCP028774"/>
    <property type="match status" value="1"/>
</dbReference>
<dbReference type="SUPFAM" id="SSF53335">
    <property type="entry name" value="S-adenosyl-L-methionine-dependent methyltransferases"/>
    <property type="match status" value="1"/>
</dbReference>